<organism>
    <name type="scientific">Salmonella paratyphi B (strain ATCC BAA-1250 / SPB7)</name>
    <dbReference type="NCBI Taxonomy" id="1016998"/>
    <lineage>
        <taxon>Bacteria</taxon>
        <taxon>Pseudomonadati</taxon>
        <taxon>Pseudomonadota</taxon>
        <taxon>Gammaproteobacteria</taxon>
        <taxon>Enterobacterales</taxon>
        <taxon>Enterobacteriaceae</taxon>
        <taxon>Salmonella</taxon>
    </lineage>
</organism>
<comment type="catalytic activity">
    <reaction evidence="1">
        <text>CMP + ATP = CDP + ADP</text>
        <dbReference type="Rhea" id="RHEA:11600"/>
        <dbReference type="ChEBI" id="CHEBI:30616"/>
        <dbReference type="ChEBI" id="CHEBI:58069"/>
        <dbReference type="ChEBI" id="CHEBI:60377"/>
        <dbReference type="ChEBI" id="CHEBI:456216"/>
        <dbReference type="EC" id="2.7.4.25"/>
    </reaction>
</comment>
<comment type="catalytic activity">
    <reaction evidence="1">
        <text>dCMP + ATP = dCDP + ADP</text>
        <dbReference type="Rhea" id="RHEA:25094"/>
        <dbReference type="ChEBI" id="CHEBI:30616"/>
        <dbReference type="ChEBI" id="CHEBI:57566"/>
        <dbReference type="ChEBI" id="CHEBI:58593"/>
        <dbReference type="ChEBI" id="CHEBI:456216"/>
        <dbReference type="EC" id="2.7.4.25"/>
    </reaction>
</comment>
<comment type="subcellular location">
    <subcellularLocation>
        <location evidence="1">Cytoplasm</location>
    </subcellularLocation>
</comment>
<comment type="similarity">
    <text evidence="1">Belongs to the cytidylate kinase family. Type 1 subfamily.</text>
</comment>
<accession>A9N7V4</accession>
<proteinExistence type="inferred from homology"/>
<evidence type="ECO:0000255" key="1">
    <source>
        <dbReference type="HAMAP-Rule" id="MF_00238"/>
    </source>
</evidence>
<protein>
    <recommendedName>
        <fullName evidence="1">Cytidylate kinase</fullName>
        <shortName evidence="1">CK</shortName>
        <ecNumber evidence="1">2.7.4.25</ecNumber>
    </recommendedName>
    <alternativeName>
        <fullName evidence="1">Cytidine monophosphate kinase</fullName>
        <shortName evidence="1">CMP kinase</shortName>
    </alternativeName>
</protein>
<name>KCY_SALPB</name>
<reference key="1">
    <citation type="submission" date="2007-11" db="EMBL/GenBank/DDBJ databases">
        <authorList>
            <consortium name="The Salmonella enterica serovar Paratyphi B Genome Sequencing Project"/>
            <person name="McClelland M."/>
            <person name="Sanderson E.K."/>
            <person name="Porwollik S."/>
            <person name="Spieth J."/>
            <person name="Clifton W.S."/>
            <person name="Fulton R."/>
            <person name="Cordes M."/>
            <person name="Wollam A."/>
            <person name="Shah N."/>
            <person name="Pepin K."/>
            <person name="Bhonagiri V."/>
            <person name="Nash W."/>
            <person name="Johnson M."/>
            <person name="Thiruvilangam P."/>
            <person name="Wilson R."/>
        </authorList>
    </citation>
    <scope>NUCLEOTIDE SEQUENCE [LARGE SCALE GENOMIC DNA]</scope>
    <source>
        <strain>ATCC BAA-1250 / SPB7</strain>
    </source>
</reference>
<feature type="chain" id="PRO_1000078348" description="Cytidylate kinase">
    <location>
        <begin position="1"/>
        <end position="227"/>
    </location>
</feature>
<feature type="binding site" evidence="1">
    <location>
        <begin position="12"/>
        <end position="20"/>
    </location>
    <ligand>
        <name>ATP</name>
        <dbReference type="ChEBI" id="CHEBI:30616"/>
    </ligand>
</feature>
<gene>
    <name evidence="1" type="primary">cmk</name>
    <name type="ordered locus">SPAB_02536</name>
</gene>
<sequence length="227" mass="24760">MTAIAPVITIDGPSGAGKGTLCKAMAEALQWHLLDSGAIYRVLALAALHHHVDLASEDALVPLASHLDVRFVSTDGNLEVILEGEDVSGEIRTQEVANAASQVAAFPRVREALLRRQRAFREAPGLIADGRDMGTVVFPDAPVKIFLDASSEERAHRRMLQLQENGFSVNFERLLAEIKERDDRDRNRAVAPLVPAADALVLDSTRLSIEQVIEKALQYARQKLALA</sequence>
<dbReference type="EC" id="2.7.4.25" evidence="1"/>
<dbReference type="EMBL" id="CP000886">
    <property type="protein sequence ID" value="ABX67916.1"/>
    <property type="molecule type" value="Genomic_DNA"/>
</dbReference>
<dbReference type="RefSeq" id="WP_000125007.1">
    <property type="nucleotide sequence ID" value="NC_010102.1"/>
</dbReference>
<dbReference type="SMR" id="A9N7V4"/>
<dbReference type="KEGG" id="spq:SPAB_02536"/>
<dbReference type="PATRIC" id="fig|1016998.12.peg.2402"/>
<dbReference type="HOGENOM" id="CLU_079959_0_2_6"/>
<dbReference type="BioCyc" id="SENT1016998:SPAB_RS10305-MONOMER"/>
<dbReference type="Proteomes" id="UP000008556">
    <property type="component" value="Chromosome"/>
</dbReference>
<dbReference type="GO" id="GO:0005829">
    <property type="term" value="C:cytosol"/>
    <property type="evidence" value="ECO:0007669"/>
    <property type="project" value="TreeGrafter"/>
</dbReference>
<dbReference type="GO" id="GO:0005524">
    <property type="term" value="F:ATP binding"/>
    <property type="evidence" value="ECO:0007669"/>
    <property type="project" value="UniProtKB-UniRule"/>
</dbReference>
<dbReference type="GO" id="GO:0036430">
    <property type="term" value="F:CMP kinase activity"/>
    <property type="evidence" value="ECO:0007669"/>
    <property type="project" value="RHEA"/>
</dbReference>
<dbReference type="GO" id="GO:0036431">
    <property type="term" value="F:dCMP kinase activity"/>
    <property type="evidence" value="ECO:0007669"/>
    <property type="project" value="RHEA"/>
</dbReference>
<dbReference type="GO" id="GO:0015949">
    <property type="term" value="P:nucleobase-containing small molecule interconversion"/>
    <property type="evidence" value="ECO:0007669"/>
    <property type="project" value="TreeGrafter"/>
</dbReference>
<dbReference type="GO" id="GO:0006220">
    <property type="term" value="P:pyrimidine nucleotide metabolic process"/>
    <property type="evidence" value="ECO:0007669"/>
    <property type="project" value="UniProtKB-UniRule"/>
</dbReference>
<dbReference type="CDD" id="cd02020">
    <property type="entry name" value="CMPK"/>
    <property type="match status" value="1"/>
</dbReference>
<dbReference type="FunFam" id="3.40.50.300:FF:000262">
    <property type="entry name" value="Cytidylate kinase"/>
    <property type="match status" value="1"/>
</dbReference>
<dbReference type="Gene3D" id="3.40.50.300">
    <property type="entry name" value="P-loop containing nucleotide triphosphate hydrolases"/>
    <property type="match status" value="1"/>
</dbReference>
<dbReference type="HAMAP" id="MF_00238">
    <property type="entry name" value="Cytidyl_kinase_type1"/>
    <property type="match status" value="1"/>
</dbReference>
<dbReference type="InterPro" id="IPR003136">
    <property type="entry name" value="Cytidylate_kin"/>
</dbReference>
<dbReference type="InterPro" id="IPR011994">
    <property type="entry name" value="Cytidylate_kinase_dom"/>
</dbReference>
<dbReference type="InterPro" id="IPR027417">
    <property type="entry name" value="P-loop_NTPase"/>
</dbReference>
<dbReference type="NCBIfam" id="TIGR00017">
    <property type="entry name" value="cmk"/>
    <property type="match status" value="1"/>
</dbReference>
<dbReference type="PANTHER" id="PTHR21299:SF2">
    <property type="entry name" value="CYTIDYLATE KINASE"/>
    <property type="match status" value="1"/>
</dbReference>
<dbReference type="PANTHER" id="PTHR21299">
    <property type="entry name" value="CYTIDYLATE KINASE/PANTOATE-BETA-ALANINE LIGASE"/>
    <property type="match status" value="1"/>
</dbReference>
<dbReference type="Pfam" id="PF02224">
    <property type="entry name" value="Cytidylate_kin"/>
    <property type="match status" value="1"/>
</dbReference>
<dbReference type="SUPFAM" id="SSF52540">
    <property type="entry name" value="P-loop containing nucleoside triphosphate hydrolases"/>
    <property type="match status" value="1"/>
</dbReference>
<keyword id="KW-0067">ATP-binding</keyword>
<keyword id="KW-0963">Cytoplasm</keyword>
<keyword id="KW-0418">Kinase</keyword>
<keyword id="KW-0547">Nucleotide-binding</keyword>
<keyword id="KW-0808">Transferase</keyword>